<organism>
    <name type="scientific">Streptomyces coelicolor (strain ATCC BAA-471 / A3(2) / M145)</name>
    <dbReference type="NCBI Taxonomy" id="100226"/>
    <lineage>
        <taxon>Bacteria</taxon>
        <taxon>Bacillati</taxon>
        <taxon>Actinomycetota</taxon>
        <taxon>Actinomycetes</taxon>
        <taxon>Kitasatosporales</taxon>
        <taxon>Streptomycetaceae</taxon>
        <taxon>Streptomyces</taxon>
        <taxon>Streptomyces albidoflavus group</taxon>
    </lineage>
</organism>
<keyword id="KW-0002">3D-structure</keyword>
<keyword id="KW-0045">Antibiotic biosynthesis</keyword>
<keyword id="KW-0596">Phosphopantetheine</keyword>
<keyword id="KW-0597">Phosphoprotein</keyword>
<keyword id="KW-1185">Reference proteome</keyword>
<accession>Q02054</accession>
<name>ACPX_STRCO</name>
<sequence length="86" mass="9248">MATLLTTDDLRRALVECAGETDGTDLSGDFLDLRFEDIGYDSLALMETAARLESRYGVSIPDDVAGRVDTPRELLDLINGALAEAA</sequence>
<feature type="chain" id="PRO_0000180255" description="Actinorhodin polyketide synthase acyl carrier protein">
    <location>
        <begin position="1"/>
        <end position="86"/>
    </location>
</feature>
<feature type="domain" description="Carrier" evidence="1">
    <location>
        <begin position="4"/>
        <end position="82"/>
    </location>
</feature>
<feature type="modified residue" description="O-(pantetheine 4'-phosphoryl)serine" evidence="1 2 3">
    <location>
        <position position="42"/>
    </location>
</feature>
<feature type="helix" evidence="5">
    <location>
        <begin position="7"/>
        <end position="15"/>
    </location>
</feature>
<feature type="strand" evidence="6">
    <location>
        <begin position="18"/>
        <end position="22"/>
    </location>
</feature>
<feature type="turn" evidence="5">
    <location>
        <begin position="26"/>
        <end position="28"/>
    </location>
</feature>
<feature type="helix" evidence="6">
    <location>
        <begin position="30"/>
        <end position="32"/>
    </location>
</feature>
<feature type="turn" evidence="5">
    <location>
        <begin position="35"/>
        <end position="39"/>
    </location>
</feature>
<feature type="turn" evidence="5">
    <location>
        <begin position="42"/>
        <end position="44"/>
    </location>
</feature>
<feature type="helix" evidence="5">
    <location>
        <begin position="45"/>
        <end position="52"/>
    </location>
</feature>
<feature type="turn" evidence="5">
    <location>
        <begin position="53"/>
        <end position="56"/>
    </location>
</feature>
<feature type="turn" evidence="5">
    <location>
        <begin position="62"/>
        <end position="67"/>
    </location>
</feature>
<feature type="helix" evidence="5">
    <location>
        <begin position="71"/>
        <end position="85"/>
    </location>
</feature>
<comment type="function">
    <text>Acyl carrier protein.</text>
</comment>
<comment type="pathway">
    <text>Antibiotic biosynthesis; actinorhodin biosynthesis.</text>
</comment>
<comment type="PTM">
    <text evidence="4">4'-phosphopantetheine is transferred from CoA to a specific serine of the apo-ACP-like protein.</text>
</comment>
<protein>
    <recommendedName>
        <fullName>Actinorhodin polyketide synthase acyl carrier protein</fullName>
        <shortName>ACP</shortName>
    </recommendedName>
    <alternativeName>
        <fullName>actI ORF3</fullName>
    </alternativeName>
</protein>
<reference key="1">
    <citation type="journal article" date="1992" name="J. Biol. Chem.">
        <title>Nucleotide sequence and deduced functions of a set of cotranscribed genes of Streptomyces coelicolor A3(2) including the polyketide synthase for the antibiotic actinorhodin.</title>
        <authorList>
            <person name="Fernandez-Moreno M.A."/>
            <person name="Martinez E."/>
            <person name="Boto L."/>
            <person name="Hopwood D.A."/>
            <person name="Malpartida F."/>
        </authorList>
    </citation>
    <scope>NUCLEOTIDE SEQUENCE [GENOMIC DNA]</scope>
    <scope>PHOSPHOPANTETHEINYLATION AT SER-42</scope>
    <source>
        <strain>ATCC BAA-471 / A3(2) / M145</strain>
    </source>
</reference>
<reference key="2">
    <citation type="journal article" date="2002" name="Nature">
        <title>Complete genome sequence of the model actinomycete Streptomyces coelicolor A3(2).</title>
        <authorList>
            <person name="Bentley S.D."/>
            <person name="Chater K.F."/>
            <person name="Cerdeno-Tarraga A.-M."/>
            <person name="Challis G.L."/>
            <person name="Thomson N.R."/>
            <person name="James K.D."/>
            <person name="Harris D.E."/>
            <person name="Quail M.A."/>
            <person name="Kieser H."/>
            <person name="Harper D."/>
            <person name="Bateman A."/>
            <person name="Brown S."/>
            <person name="Chandra G."/>
            <person name="Chen C.W."/>
            <person name="Collins M."/>
            <person name="Cronin A."/>
            <person name="Fraser A."/>
            <person name="Goble A."/>
            <person name="Hidalgo J."/>
            <person name="Hornsby T."/>
            <person name="Howarth S."/>
            <person name="Huang C.-H."/>
            <person name="Kieser T."/>
            <person name="Larke L."/>
            <person name="Murphy L.D."/>
            <person name="Oliver K."/>
            <person name="O'Neil S."/>
            <person name="Rabbinowitsch E."/>
            <person name="Rajandream M.A."/>
            <person name="Rutherford K.M."/>
            <person name="Rutter S."/>
            <person name="Seeger K."/>
            <person name="Saunders D."/>
            <person name="Sharp S."/>
            <person name="Squares R."/>
            <person name="Squares S."/>
            <person name="Taylor K."/>
            <person name="Warren T."/>
            <person name="Wietzorrek A."/>
            <person name="Woodward J.R."/>
            <person name="Barrell B.G."/>
            <person name="Parkhill J."/>
            <person name="Hopwood D.A."/>
        </authorList>
    </citation>
    <scope>NUCLEOTIDE SEQUENCE [LARGE SCALE GENOMIC DNA]</scope>
    <source>
        <strain>ATCC BAA-471 / A3(2) / M145</strain>
    </source>
</reference>
<reference key="3">
    <citation type="journal article" date="1997" name="Biochemistry">
        <title>Solution structure of the actinorhodin polyketide synthase acyl carrier protein from Streptomyces coelicolor A3(2).</title>
        <authorList>
            <person name="Crump M.P."/>
            <person name="Crosby J."/>
            <person name="Dempsey C.E."/>
            <person name="Parkinson J.A."/>
            <person name="Murray M."/>
            <person name="Hopwood D.A."/>
            <person name="Simpson T.J."/>
        </authorList>
    </citation>
    <scope>STRUCTURE BY NMR</scope>
    <source>
        <strain>A3(2) / NRRL B-16638</strain>
    </source>
</reference>
<gene>
    <name type="ordered locus">SCO5089</name>
    <name type="ORF">SCBAC28G1.15</name>
</gene>
<proteinExistence type="evidence at protein level"/>
<evidence type="ECO:0000255" key="1">
    <source>
        <dbReference type="PROSITE-ProRule" id="PRU00258"/>
    </source>
</evidence>
<evidence type="ECO:0000269" key="2">
    <source>
    </source>
</evidence>
<evidence type="ECO:0000269" key="3">
    <source>
    </source>
</evidence>
<evidence type="ECO:0000305" key="4"/>
<evidence type="ECO:0007829" key="5">
    <source>
        <dbReference type="PDB" id="1AF8"/>
    </source>
</evidence>
<evidence type="ECO:0007829" key="6">
    <source>
        <dbReference type="PDB" id="2KG8"/>
    </source>
</evidence>
<dbReference type="EMBL" id="X63449">
    <property type="protein sequence ID" value="CAA45045.1"/>
    <property type="molecule type" value="Genomic_DNA"/>
</dbReference>
<dbReference type="EMBL" id="AL939122">
    <property type="protein sequence ID" value="CAC44202.1"/>
    <property type="molecule type" value="Genomic_DNA"/>
</dbReference>
<dbReference type="PIR" id="S25842">
    <property type="entry name" value="S25842"/>
</dbReference>
<dbReference type="RefSeq" id="NP_629239.1">
    <property type="nucleotide sequence ID" value="NC_003888.3"/>
</dbReference>
<dbReference type="RefSeq" id="WP_003973889.1">
    <property type="nucleotide sequence ID" value="NZ_VNID01000008.1"/>
</dbReference>
<dbReference type="PDB" id="1AF8">
    <property type="method" value="NMR"/>
    <property type="chains" value="A=1-86"/>
</dbReference>
<dbReference type="PDB" id="2AF8">
    <property type="method" value="NMR"/>
    <property type="chains" value="A=1-86"/>
</dbReference>
<dbReference type="PDB" id="2K0X">
    <property type="method" value="NMR"/>
    <property type="chains" value="A=1-86"/>
</dbReference>
<dbReference type="PDB" id="2K0Y">
    <property type="method" value="NMR"/>
    <property type="chains" value="A=1-86"/>
</dbReference>
<dbReference type="PDB" id="2KG6">
    <property type="method" value="NMR"/>
    <property type="chains" value="A=1-86"/>
</dbReference>
<dbReference type="PDB" id="2KG8">
    <property type="method" value="NMR"/>
    <property type="chains" value="A=1-86"/>
</dbReference>
<dbReference type="PDB" id="2KG9">
    <property type="method" value="NMR"/>
    <property type="chains" value="A=1-86"/>
</dbReference>
<dbReference type="PDB" id="2KGA">
    <property type="method" value="NMR"/>
    <property type="chains" value="A=1-86"/>
</dbReference>
<dbReference type="PDB" id="2KGC">
    <property type="method" value="NMR"/>
    <property type="chains" value="A=1-86"/>
</dbReference>
<dbReference type="PDB" id="2KGD">
    <property type="method" value="NMR"/>
    <property type="chains" value="A=1-86"/>
</dbReference>
<dbReference type="PDB" id="2KGE">
    <property type="method" value="NMR"/>
    <property type="chains" value="A=1-86"/>
</dbReference>
<dbReference type="PDB" id="2MVU">
    <property type="method" value="NMR"/>
    <property type="chains" value="A=1-86"/>
</dbReference>
<dbReference type="PDB" id="2MVV">
    <property type="method" value="NMR"/>
    <property type="chains" value="A=1-86"/>
</dbReference>
<dbReference type="PDBsum" id="1AF8"/>
<dbReference type="PDBsum" id="2AF8"/>
<dbReference type="PDBsum" id="2K0X"/>
<dbReference type="PDBsum" id="2K0Y"/>
<dbReference type="PDBsum" id="2KG6"/>
<dbReference type="PDBsum" id="2KG8"/>
<dbReference type="PDBsum" id="2KG9"/>
<dbReference type="PDBsum" id="2KGA"/>
<dbReference type="PDBsum" id="2KGC"/>
<dbReference type="PDBsum" id="2KGD"/>
<dbReference type="PDBsum" id="2KGE"/>
<dbReference type="PDBsum" id="2MVU"/>
<dbReference type="PDBsum" id="2MVV"/>
<dbReference type="BMRB" id="Q02054"/>
<dbReference type="SMR" id="Q02054"/>
<dbReference type="STRING" id="100226.gene:17762738"/>
<dbReference type="DrugBank" id="DB08585">
    <property type="generic name" value="S-[2-({N-[(2S)-2-hydroxy-3,3-dimethyl-4-(phosphonooxy)butanoyl]-beta-alanyl}amino)ethyl] hexanethioate"/>
</dbReference>
<dbReference type="DrugBank" id="DB08586">
    <property type="generic name" value="S-[2-({N-[(2S)-2-hydroxy-3,3-dimethyl-4-(phosphonooxy)butanoyl]-beta-alanyl}amino)ethyl] octanethioate"/>
</dbReference>
<dbReference type="PaxDb" id="100226-SCO5089"/>
<dbReference type="KEGG" id="sco:SCO5089"/>
<dbReference type="PATRIC" id="fig|100226.15.peg.5169"/>
<dbReference type="eggNOG" id="COG0236">
    <property type="taxonomic scope" value="Bacteria"/>
</dbReference>
<dbReference type="HOGENOM" id="CLU_108696_12_0_11"/>
<dbReference type="InParanoid" id="Q02054"/>
<dbReference type="OrthoDB" id="3537906at2"/>
<dbReference type="PhylomeDB" id="Q02054"/>
<dbReference type="UniPathway" id="UPA00173"/>
<dbReference type="EvolutionaryTrace" id="Q02054"/>
<dbReference type="PRO" id="PR:Q02054"/>
<dbReference type="Proteomes" id="UP000001973">
    <property type="component" value="Chromosome"/>
</dbReference>
<dbReference type="GO" id="GO:0005829">
    <property type="term" value="C:cytosol"/>
    <property type="evidence" value="ECO:0000318"/>
    <property type="project" value="GO_Central"/>
</dbReference>
<dbReference type="GO" id="GO:0016020">
    <property type="term" value="C:membrane"/>
    <property type="evidence" value="ECO:0007669"/>
    <property type="project" value="GOC"/>
</dbReference>
<dbReference type="GO" id="GO:0000035">
    <property type="term" value="F:acyl binding"/>
    <property type="evidence" value="ECO:0000318"/>
    <property type="project" value="GO_Central"/>
</dbReference>
<dbReference type="GO" id="GO:0000036">
    <property type="term" value="F:acyl carrier activity"/>
    <property type="evidence" value="ECO:0000318"/>
    <property type="project" value="GO_Central"/>
</dbReference>
<dbReference type="GO" id="GO:0017000">
    <property type="term" value="P:antibiotic biosynthetic process"/>
    <property type="evidence" value="ECO:0007669"/>
    <property type="project" value="UniProtKB-KW"/>
</dbReference>
<dbReference type="GO" id="GO:0009245">
    <property type="term" value="P:lipid A biosynthetic process"/>
    <property type="evidence" value="ECO:0000318"/>
    <property type="project" value="GO_Central"/>
</dbReference>
<dbReference type="Gene3D" id="1.10.1200.10">
    <property type="entry name" value="ACP-like"/>
    <property type="match status" value="1"/>
</dbReference>
<dbReference type="InterPro" id="IPR036736">
    <property type="entry name" value="ACP-like_sf"/>
</dbReference>
<dbReference type="InterPro" id="IPR009081">
    <property type="entry name" value="PP-bd_ACP"/>
</dbReference>
<dbReference type="InterPro" id="IPR006162">
    <property type="entry name" value="Ppantetheine_attach_site"/>
</dbReference>
<dbReference type="Pfam" id="PF00550">
    <property type="entry name" value="PP-binding"/>
    <property type="match status" value="1"/>
</dbReference>
<dbReference type="SUPFAM" id="SSF47336">
    <property type="entry name" value="ACP-like"/>
    <property type="match status" value="1"/>
</dbReference>
<dbReference type="PROSITE" id="PS50075">
    <property type="entry name" value="CARRIER"/>
    <property type="match status" value="1"/>
</dbReference>
<dbReference type="PROSITE" id="PS00012">
    <property type="entry name" value="PHOSPHOPANTETHEINE"/>
    <property type="match status" value="1"/>
</dbReference>